<name>CA127_CONPO</name>
<evidence type="ECO:0000250" key="1">
    <source>
        <dbReference type="UniProtKB" id="D9IWN7"/>
    </source>
</evidence>
<evidence type="ECO:0000255" key="2"/>
<evidence type="ECO:0000269" key="3">
    <source ref="1"/>
</evidence>
<evidence type="ECO:0000305" key="4"/>
<evidence type="ECO:0000305" key="5">
    <source ref="1"/>
</evidence>
<evidence type="ECO:0000312" key="6">
    <source>
        <dbReference type="EMBL" id="ADJ67509.1"/>
    </source>
</evidence>
<dbReference type="EMBL" id="HM211180">
    <property type="protein sequence ID" value="ADJ67509.1"/>
    <property type="molecule type" value="mRNA"/>
</dbReference>
<dbReference type="GO" id="GO:0005576">
    <property type="term" value="C:extracellular region"/>
    <property type="evidence" value="ECO:0007669"/>
    <property type="project" value="UniProtKB-SubCell"/>
</dbReference>
<dbReference type="GO" id="GO:0035792">
    <property type="term" value="C:host cell postsynaptic membrane"/>
    <property type="evidence" value="ECO:0007669"/>
    <property type="project" value="UniProtKB-KW"/>
</dbReference>
<dbReference type="GO" id="GO:0030550">
    <property type="term" value="F:acetylcholine receptor inhibitor activity"/>
    <property type="evidence" value="ECO:0007669"/>
    <property type="project" value="UniProtKB-KW"/>
</dbReference>
<dbReference type="GO" id="GO:0005246">
    <property type="term" value="F:calcium channel regulator activity"/>
    <property type="evidence" value="ECO:0007669"/>
    <property type="project" value="UniProtKB-KW"/>
</dbReference>
<dbReference type="GO" id="GO:0090729">
    <property type="term" value="F:toxin activity"/>
    <property type="evidence" value="ECO:0007669"/>
    <property type="project" value="UniProtKB-KW"/>
</dbReference>
<dbReference type="InterPro" id="IPR009958">
    <property type="entry name" value="Conotoxin_a-typ"/>
</dbReference>
<dbReference type="Pfam" id="PF07365">
    <property type="entry name" value="Toxin_8"/>
    <property type="match status" value="1"/>
</dbReference>
<reference evidence="6" key="1">
    <citation type="journal article" date="2022" name="Front. Pharmacol.">
        <title>A 4/8 subtype alpha-conotoxin Vt1.27 inhibits N-type calcium channels with potent anti-allodynic effect.</title>
        <authorList>
            <person name="Wang S."/>
            <person name="Bartels P."/>
            <person name="Zhao C."/>
            <person name="Yousuf A."/>
            <person name="Liu Z."/>
            <person name="Yu S."/>
            <person name="Bony A.R."/>
            <person name="Ma X."/>
            <person name="Dai Q."/>
            <person name="Sun T."/>
            <person name="Liu N."/>
            <person name="Yang M."/>
            <person name="Yu R."/>
            <person name="Du W."/>
            <person name="Adams D.J."/>
            <person name="Dai Q."/>
        </authorList>
    </citation>
    <scope>NUCLEOTIDE SEQUENCE [MRNA]</scope>
    <scope>FUNCTION OF THE SYNTHETIC PEPTIDE</scope>
    <scope>BIOASSAY</scope>
    <scope>SYNTHESIS OF 45-61</scope>
    <scope>STRUCTURE BY NMR OF 45-61</scope>
    <source>
        <strain>C.vitulinus</strain>
        <tissue>Venom duct</tissue>
    </source>
</reference>
<sequence length="62" mass="6753">MGMRMMFTVFLLVVLATTVVSFTLDRASDGASAAADLVARGIRGNCCMFHTCPIDYSRFNCP</sequence>
<feature type="signal peptide" evidence="2">
    <location>
        <begin position="1"/>
        <end position="21"/>
    </location>
</feature>
<feature type="propeptide" id="PRO_0000456908" evidence="1">
    <location>
        <begin position="22"/>
        <end position="40"/>
    </location>
</feature>
<feature type="peptide" id="PRO_5003125730" description="Alpha-conotoxin Vt1.27" evidence="1">
    <location>
        <begin position="41"/>
        <end position="62"/>
    </location>
</feature>
<feature type="disulfide bond" evidence="1 5">
    <location>
        <begin position="46"/>
        <end position="52"/>
    </location>
</feature>
<feature type="disulfide bond" evidence="1 5">
    <location>
        <begin position="47"/>
        <end position="61"/>
    </location>
</feature>
<proteinExistence type="evidence at protein level"/>
<keyword id="KW-0008">Acetylcholine receptor inhibiting toxin</keyword>
<keyword id="KW-0108">Calcium channel impairing toxin</keyword>
<keyword id="KW-1015">Disulfide bond</keyword>
<keyword id="KW-0872">Ion channel impairing toxin</keyword>
<keyword id="KW-0528">Neurotoxin</keyword>
<keyword id="KW-0629">Postsynaptic neurotoxin</keyword>
<keyword id="KW-0964">Secreted</keyword>
<keyword id="KW-0732">Signal</keyword>
<keyword id="KW-0800">Toxin</keyword>
<keyword id="KW-1218">Voltage-gated calcium channel impairing toxin</keyword>
<protein>
    <recommendedName>
        <fullName evidence="6">Alpha-conotoxin Vt1.27</fullName>
    </recommendedName>
</protein>
<accession>D9IWN6</accession>
<comment type="function">
    <text evidence="3">The short (45-61) amidated synthetic peptide inhibits the rat neuronal alpha-3-beta-2/CHRNA3-CHRNB2 nicotinic acetylcholine receptor (nAChR) (IC(50)=1.16 uM). It also inhibits Cav2.2/CACNA1C voltage-gated calcium channel (IC(50)=398 nM). In vivo, when tested in rat pain models, this short amidated peptide increases the pain threshold.</text>
</comment>
<comment type="subcellular location">
    <subcellularLocation>
        <location evidence="5">Secreted</location>
    </subcellularLocation>
</comment>
<comment type="tissue specificity">
    <text evidence="5">Expressed by the venom duct.</text>
</comment>
<comment type="domain">
    <text evidence="4">The cysteine framework is I (CC-C-C). Alpha4/8 pattern.</text>
</comment>
<comment type="miscellaneous">
    <text evidence="3">The short (45-61) amidated synthetic peptide shows very low or no activity on rat alpha-2-beta-2/CHRNA2-CHRNB2, alpha-2-beta-4/CHRNA2-CHRNB4, alpha-3-beta-4/CHRNA3-CHRNB4, alpha-4-beta-2/CHRNA4-CHRNB2, alpha-4-beta-4/CHRNA4-CHRNB4, alpha-7/CHRNA7, alpha-9-alpha-10/CHRNA9-CHRNA10 nAChRs, when tested at 10 uM. It is also non-active against L- and T-type calcium channels, as well as on voltage-gated sodium and potassium channels.</text>
</comment>
<comment type="similarity">
    <text evidence="4">Belongs to the conotoxin A superfamily.</text>
</comment>
<comment type="caution">
    <text evidence="5">Wang et al., 2022 propose a shorter sequence (45-61) that the one shown in this entry. Furthermore, they suggest that its C-terminal Cys is amidated, whereas it is not followed by the usual Gly that provides the amide group.</text>
</comment>
<comment type="caution">
    <text evidence="4">The status of C.vitulinus is unclear.</text>
</comment>
<organism>
    <name type="scientific">Conus planorbis</name>
    <name type="common">Planorbis cone</name>
    <dbReference type="NCBI Taxonomy" id="97183"/>
    <lineage>
        <taxon>Eukaryota</taxon>
        <taxon>Metazoa</taxon>
        <taxon>Spiralia</taxon>
        <taxon>Lophotrochozoa</taxon>
        <taxon>Mollusca</taxon>
        <taxon>Gastropoda</taxon>
        <taxon>Caenogastropoda</taxon>
        <taxon>Neogastropoda</taxon>
        <taxon>Conoidea</taxon>
        <taxon>Conidae</taxon>
        <taxon>Conus</taxon>
        <taxon>Strategoconus</taxon>
    </lineage>
</organism>